<dbReference type="EC" id="4.1.2.4" evidence="1"/>
<dbReference type="EMBL" id="AE017263">
    <property type="protein sequence ID" value="AAT75477.1"/>
    <property type="molecule type" value="Genomic_DNA"/>
</dbReference>
<dbReference type="RefSeq" id="WP_011183018.1">
    <property type="nucleotide sequence ID" value="NC_006055.1"/>
</dbReference>
<dbReference type="RefSeq" id="YP_053361.1">
    <property type="nucleotide sequence ID" value="NC_006055.1"/>
</dbReference>
<dbReference type="SMR" id="Q6F1Z6"/>
<dbReference type="STRING" id="265311.Mfl121"/>
<dbReference type="PaxDb" id="265311-Mfl121"/>
<dbReference type="EnsemblBacteria" id="AAT75477">
    <property type="protein sequence ID" value="AAT75477"/>
    <property type="gene ID" value="Mfl121"/>
</dbReference>
<dbReference type="GeneID" id="2897764"/>
<dbReference type="KEGG" id="mfl:Mfl121"/>
<dbReference type="PATRIC" id="fig|265311.5.peg.122"/>
<dbReference type="eggNOG" id="COG0274">
    <property type="taxonomic scope" value="Bacteria"/>
</dbReference>
<dbReference type="HOGENOM" id="CLU_053595_0_1_14"/>
<dbReference type="OrthoDB" id="9778711at2"/>
<dbReference type="UniPathway" id="UPA00002">
    <property type="reaction ID" value="UER00468"/>
</dbReference>
<dbReference type="Proteomes" id="UP000006647">
    <property type="component" value="Chromosome"/>
</dbReference>
<dbReference type="GO" id="GO:0005737">
    <property type="term" value="C:cytoplasm"/>
    <property type="evidence" value="ECO:0007669"/>
    <property type="project" value="UniProtKB-SubCell"/>
</dbReference>
<dbReference type="GO" id="GO:0004139">
    <property type="term" value="F:deoxyribose-phosphate aldolase activity"/>
    <property type="evidence" value="ECO:0007669"/>
    <property type="project" value="UniProtKB-UniRule"/>
</dbReference>
<dbReference type="GO" id="GO:0006018">
    <property type="term" value="P:2-deoxyribose 1-phosphate catabolic process"/>
    <property type="evidence" value="ECO:0007669"/>
    <property type="project" value="UniProtKB-UniRule"/>
</dbReference>
<dbReference type="GO" id="GO:0016052">
    <property type="term" value="P:carbohydrate catabolic process"/>
    <property type="evidence" value="ECO:0007669"/>
    <property type="project" value="TreeGrafter"/>
</dbReference>
<dbReference type="GO" id="GO:0009264">
    <property type="term" value="P:deoxyribonucleotide catabolic process"/>
    <property type="evidence" value="ECO:0007669"/>
    <property type="project" value="InterPro"/>
</dbReference>
<dbReference type="CDD" id="cd00959">
    <property type="entry name" value="DeoC"/>
    <property type="match status" value="1"/>
</dbReference>
<dbReference type="FunFam" id="3.20.20.70:FF:000044">
    <property type="entry name" value="Deoxyribose-phosphate aldolase"/>
    <property type="match status" value="1"/>
</dbReference>
<dbReference type="Gene3D" id="3.20.20.70">
    <property type="entry name" value="Aldolase class I"/>
    <property type="match status" value="1"/>
</dbReference>
<dbReference type="HAMAP" id="MF_00114">
    <property type="entry name" value="DeoC_type1"/>
    <property type="match status" value="1"/>
</dbReference>
<dbReference type="InterPro" id="IPR013785">
    <property type="entry name" value="Aldolase_TIM"/>
</dbReference>
<dbReference type="InterPro" id="IPR011343">
    <property type="entry name" value="DeoC"/>
</dbReference>
<dbReference type="InterPro" id="IPR002915">
    <property type="entry name" value="DeoC/FbaB/LacD_aldolase"/>
</dbReference>
<dbReference type="InterPro" id="IPR028581">
    <property type="entry name" value="DeoC_typeI"/>
</dbReference>
<dbReference type="NCBIfam" id="TIGR00126">
    <property type="entry name" value="deoC"/>
    <property type="match status" value="1"/>
</dbReference>
<dbReference type="PANTHER" id="PTHR10889">
    <property type="entry name" value="DEOXYRIBOSE-PHOSPHATE ALDOLASE"/>
    <property type="match status" value="1"/>
</dbReference>
<dbReference type="PANTHER" id="PTHR10889:SF1">
    <property type="entry name" value="DEOXYRIBOSE-PHOSPHATE ALDOLASE"/>
    <property type="match status" value="1"/>
</dbReference>
<dbReference type="Pfam" id="PF01791">
    <property type="entry name" value="DeoC"/>
    <property type="match status" value="1"/>
</dbReference>
<dbReference type="PIRSF" id="PIRSF001357">
    <property type="entry name" value="DeoC"/>
    <property type="match status" value="1"/>
</dbReference>
<dbReference type="SMART" id="SM01133">
    <property type="entry name" value="DeoC"/>
    <property type="match status" value="1"/>
</dbReference>
<dbReference type="SUPFAM" id="SSF51569">
    <property type="entry name" value="Aldolase"/>
    <property type="match status" value="1"/>
</dbReference>
<sequence>MKLNKYIDHTLLKQDATKAEIKQLCDEAIEFDFATVCVNSYWTSYCKELLKGTNVGITNVVGFPLGACTTATKAFEVSEAIKDGATEIDMVLNIGALKDKNYELVLEDMKAVKKAAGSHVVKCIMENCLLTKEEIMKACEIAVEAGLEFVKTSTGFSKSGATFEDVKLMKSVVKDNALVKAAGGVRTFEDAQKMIEAGADRLGTSGGVAIIKGEENNASY</sequence>
<reference key="1">
    <citation type="submission" date="2004-06" db="EMBL/GenBank/DDBJ databases">
        <authorList>
            <person name="Birren B.W."/>
            <person name="Stange-Thomann N."/>
            <person name="Hafez N."/>
            <person name="DeCaprio D."/>
            <person name="Fisher S."/>
            <person name="Butler J."/>
            <person name="Elkins T."/>
            <person name="Kodira C.D."/>
            <person name="Major J."/>
            <person name="Wang S."/>
            <person name="Nicol R."/>
            <person name="Nusbaum C."/>
        </authorList>
    </citation>
    <scope>NUCLEOTIDE SEQUENCE [LARGE SCALE GENOMIC DNA]</scope>
    <source>
        <strain>ATCC 33453 / NBRC 100688 / NCTC 11704 / L1</strain>
    </source>
</reference>
<name>DEOC1_MESFL</name>
<evidence type="ECO:0000255" key="1">
    <source>
        <dbReference type="HAMAP-Rule" id="MF_00114"/>
    </source>
</evidence>
<comment type="function">
    <text evidence="1">Catalyzes a reversible aldol reaction between acetaldehyde and D-glyceraldehyde 3-phosphate to generate 2-deoxy-D-ribose 5-phosphate.</text>
</comment>
<comment type="catalytic activity">
    <reaction evidence="1">
        <text>2-deoxy-D-ribose 5-phosphate = D-glyceraldehyde 3-phosphate + acetaldehyde</text>
        <dbReference type="Rhea" id="RHEA:12821"/>
        <dbReference type="ChEBI" id="CHEBI:15343"/>
        <dbReference type="ChEBI" id="CHEBI:59776"/>
        <dbReference type="ChEBI" id="CHEBI:62877"/>
        <dbReference type="EC" id="4.1.2.4"/>
    </reaction>
</comment>
<comment type="pathway">
    <text evidence="1">Carbohydrate degradation; 2-deoxy-D-ribose 1-phosphate degradation; D-glyceraldehyde 3-phosphate and acetaldehyde from 2-deoxy-alpha-D-ribose 1-phosphate: step 2/2.</text>
</comment>
<comment type="subcellular location">
    <subcellularLocation>
        <location evidence="1">Cytoplasm</location>
    </subcellularLocation>
</comment>
<comment type="similarity">
    <text evidence="1">Belongs to the DeoC/FbaB aldolase family. DeoC type 1 subfamily.</text>
</comment>
<organism>
    <name type="scientific">Mesoplasma florum (strain ATCC 33453 / NBRC 100688 / NCTC 11704 / L1)</name>
    <name type="common">Acholeplasma florum</name>
    <dbReference type="NCBI Taxonomy" id="265311"/>
    <lineage>
        <taxon>Bacteria</taxon>
        <taxon>Bacillati</taxon>
        <taxon>Mycoplasmatota</taxon>
        <taxon>Mollicutes</taxon>
        <taxon>Entomoplasmatales</taxon>
        <taxon>Entomoplasmataceae</taxon>
        <taxon>Mesoplasma</taxon>
    </lineage>
</organism>
<proteinExistence type="inferred from homology"/>
<accession>Q6F1Z6</accession>
<protein>
    <recommendedName>
        <fullName evidence="1">Deoxyribose-phosphate aldolase 1</fullName>
        <shortName evidence="1">DERA 1</shortName>
        <ecNumber evidence="1">4.1.2.4</ecNumber>
    </recommendedName>
    <alternativeName>
        <fullName evidence="1">2-deoxy-D-ribose 5-phosphate aldolase 1</fullName>
    </alternativeName>
    <alternativeName>
        <fullName evidence="1">Phosphodeoxyriboaldolase 1</fullName>
        <shortName evidence="1">Deoxyriboaldolase 1</shortName>
    </alternativeName>
</protein>
<feature type="chain" id="PRO_0000231548" description="Deoxyribose-phosphate aldolase 1">
    <location>
        <begin position="1"/>
        <end position="220"/>
    </location>
</feature>
<feature type="active site" description="Proton donor/acceptor" evidence="1">
    <location>
        <position position="89"/>
    </location>
</feature>
<feature type="active site" description="Schiff-base intermediate with acetaldehyde" evidence="1">
    <location>
        <position position="151"/>
    </location>
</feature>
<feature type="active site" description="Proton donor/acceptor" evidence="1">
    <location>
        <position position="180"/>
    </location>
</feature>
<gene>
    <name evidence="1" type="primary">deoC1</name>
    <name type="ordered locus">Mfl121</name>
</gene>
<keyword id="KW-0963">Cytoplasm</keyword>
<keyword id="KW-0456">Lyase</keyword>
<keyword id="KW-1185">Reference proteome</keyword>
<keyword id="KW-0704">Schiff base</keyword>